<comment type="function">
    <text evidence="1">F(1)F(0) ATP synthase produces ATP from ADP in the presence of a proton or sodium gradient. F-type ATPases consist of two structural domains, F(1) containing the extramembraneous catalytic core and F(0) containing the membrane proton channel, linked together by a central stalk and a peripheral stalk. During catalysis, ATP synthesis in the catalytic domain of F(1) is coupled via a rotary mechanism of the central stalk subunits to proton translocation.</text>
</comment>
<comment type="function">
    <text evidence="1">Component of the F(0) channel, it forms part of the peripheral stalk, linking F(1) to F(0). The b'-subunit is a diverged and duplicated form of b found in plants and photosynthetic bacteria.</text>
</comment>
<comment type="subunit">
    <text evidence="1">F-type ATPases have 2 components, F(1) - the catalytic core - and F(0) - the membrane proton channel. F(1) has five subunits: alpha(3), beta(3), gamma(1), delta(1), epsilon(1). F(0) has four main subunits: a(1), b(1), b'(1) and c(10-14). The alpha and beta chains form an alternating ring which encloses part of the gamma chain. F(1) is attached to F(0) by a central stalk formed by the gamma and epsilon chains, while a peripheral stalk is formed by the delta, b and b' chains.</text>
</comment>
<comment type="subcellular location">
    <subcellularLocation>
        <location evidence="1">Cellular thylakoid membrane</location>
        <topology evidence="1">Single-pass membrane protein</topology>
    </subcellularLocation>
</comment>
<comment type="similarity">
    <text evidence="1">Belongs to the ATPase B chain family.</text>
</comment>
<sequence length="153" mass="17212">MPTLFLFGASEGGLFDFDATLPLMAVQVVLLTFILNALFFKPVGRVVEEREDYVNTSRAEAKKKIAEVELLETELKDQLKEARLEAQKVILEAEQDSENLYKEALALATSEANASREKARREIDSQRDEALNQLKSEADNLGDLIIERLLAKK</sequence>
<evidence type="ECO:0000255" key="1">
    <source>
        <dbReference type="HAMAP-Rule" id="MF_01399"/>
    </source>
</evidence>
<feature type="chain" id="PRO_0000369028" description="ATP synthase subunit b'">
    <location>
        <begin position="1"/>
        <end position="153"/>
    </location>
</feature>
<feature type="transmembrane region" description="Helical" evidence="1">
    <location>
        <begin position="20"/>
        <end position="40"/>
    </location>
</feature>
<organism>
    <name type="scientific">Prochlorococcus marinus (strain NATL1A)</name>
    <dbReference type="NCBI Taxonomy" id="167555"/>
    <lineage>
        <taxon>Bacteria</taxon>
        <taxon>Bacillati</taxon>
        <taxon>Cyanobacteriota</taxon>
        <taxon>Cyanophyceae</taxon>
        <taxon>Synechococcales</taxon>
        <taxon>Prochlorococcaceae</taxon>
        <taxon>Prochlorococcus</taxon>
    </lineage>
</organism>
<name>ATPF2_PROM1</name>
<reference key="1">
    <citation type="journal article" date="2007" name="PLoS Genet.">
        <title>Patterns and implications of gene gain and loss in the evolution of Prochlorococcus.</title>
        <authorList>
            <person name="Kettler G.C."/>
            <person name="Martiny A.C."/>
            <person name="Huang K."/>
            <person name="Zucker J."/>
            <person name="Coleman M.L."/>
            <person name="Rodrigue S."/>
            <person name="Chen F."/>
            <person name="Lapidus A."/>
            <person name="Ferriera S."/>
            <person name="Johnson J."/>
            <person name="Steglich C."/>
            <person name="Church G.M."/>
            <person name="Richardson P."/>
            <person name="Chisholm S.W."/>
        </authorList>
    </citation>
    <scope>NUCLEOTIDE SEQUENCE [LARGE SCALE GENOMIC DNA]</scope>
    <source>
        <strain>NATL1A</strain>
    </source>
</reference>
<protein>
    <recommendedName>
        <fullName evidence="1">ATP synthase subunit b'</fullName>
    </recommendedName>
    <alternativeName>
        <fullName evidence="1">ATP synthase F(0) sector subunit b'</fullName>
    </alternativeName>
    <alternativeName>
        <fullName evidence="1">ATPase subunit II</fullName>
    </alternativeName>
    <alternativeName>
        <fullName evidence="1">F-type ATPase subunit b'</fullName>
        <shortName evidence="1">F-ATPase subunit b'</shortName>
    </alternativeName>
</protein>
<dbReference type="EMBL" id="CP000553">
    <property type="protein sequence ID" value="ABM76408.1"/>
    <property type="molecule type" value="Genomic_DNA"/>
</dbReference>
<dbReference type="RefSeq" id="WP_011824393.1">
    <property type="nucleotide sequence ID" value="NC_008819.1"/>
</dbReference>
<dbReference type="SMR" id="A2C4J8"/>
<dbReference type="KEGG" id="pme:NATL1_18521"/>
<dbReference type="eggNOG" id="COG0711">
    <property type="taxonomic scope" value="Bacteria"/>
</dbReference>
<dbReference type="HOGENOM" id="CLU_079215_9_0_3"/>
<dbReference type="Proteomes" id="UP000002592">
    <property type="component" value="Chromosome"/>
</dbReference>
<dbReference type="GO" id="GO:0031676">
    <property type="term" value="C:plasma membrane-derived thylakoid membrane"/>
    <property type="evidence" value="ECO:0007669"/>
    <property type="project" value="UniProtKB-SubCell"/>
</dbReference>
<dbReference type="GO" id="GO:0045259">
    <property type="term" value="C:proton-transporting ATP synthase complex"/>
    <property type="evidence" value="ECO:0007669"/>
    <property type="project" value="UniProtKB-KW"/>
</dbReference>
<dbReference type="GO" id="GO:0046933">
    <property type="term" value="F:proton-transporting ATP synthase activity, rotational mechanism"/>
    <property type="evidence" value="ECO:0007669"/>
    <property type="project" value="UniProtKB-UniRule"/>
</dbReference>
<dbReference type="GO" id="GO:0046961">
    <property type="term" value="F:proton-transporting ATPase activity, rotational mechanism"/>
    <property type="evidence" value="ECO:0007669"/>
    <property type="project" value="TreeGrafter"/>
</dbReference>
<dbReference type="CDD" id="cd06503">
    <property type="entry name" value="ATP-synt_Fo_b"/>
    <property type="match status" value="1"/>
</dbReference>
<dbReference type="Gene3D" id="1.20.5.620">
    <property type="entry name" value="F1F0 ATP synthase subunit B, membrane domain"/>
    <property type="match status" value="1"/>
</dbReference>
<dbReference type="HAMAP" id="MF_01398">
    <property type="entry name" value="ATP_synth_b_bprime"/>
    <property type="match status" value="1"/>
</dbReference>
<dbReference type="HAMAP" id="MF_01399">
    <property type="entry name" value="ATP_synth_bprime"/>
    <property type="match status" value="1"/>
</dbReference>
<dbReference type="InterPro" id="IPR034679">
    <property type="entry name" value="ATP_synth_b"/>
</dbReference>
<dbReference type="InterPro" id="IPR028987">
    <property type="entry name" value="ATP_synth_B-like_membr_sf"/>
</dbReference>
<dbReference type="InterPro" id="IPR002146">
    <property type="entry name" value="ATP_synth_b/b'su_bac/chlpt"/>
</dbReference>
<dbReference type="InterPro" id="IPR050059">
    <property type="entry name" value="ATP_synthase_B_chain"/>
</dbReference>
<dbReference type="NCBIfam" id="NF005607">
    <property type="entry name" value="PRK07353.1"/>
    <property type="match status" value="1"/>
</dbReference>
<dbReference type="PANTHER" id="PTHR33445">
    <property type="entry name" value="ATP SYNTHASE SUBUNIT B', CHLOROPLASTIC"/>
    <property type="match status" value="1"/>
</dbReference>
<dbReference type="PANTHER" id="PTHR33445:SF2">
    <property type="entry name" value="ATP SYNTHASE SUBUNIT B', CHLOROPLASTIC"/>
    <property type="match status" value="1"/>
</dbReference>
<dbReference type="Pfam" id="PF00430">
    <property type="entry name" value="ATP-synt_B"/>
    <property type="match status" value="1"/>
</dbReference>
<dbReference type="SUPFAM" id="SSF81573">
    <property type="entry name" value="F1F0 ATP synthase subunit B, membrane domain"/>
    <property type="match status" value="1"/>
</dbReference>
<keyword id="KW-0066">ATP synthesis</keyword>
<keyword id="KW-0138">CF(0)</keyword>
<keyword id="KW-0375">Hydrogen ion transport</keyword>
<keyword id="KW-0406">Ion transport</keyword>
<keyword id="KW-0472">Membrane</keyword>
<keyword id="KW-0793">Thylakoid</keyword>
<keyword id="KW-0812">Transmembrane</keyword>
<keyword id="KW-1133">Transmembrane helix</keyword>
<keyword id="KW-0813">Transport</keyword>
<gene>
    <name evidence="1" type="primary">atpF2</name>
    <name evidence="1" type="synonym">atpG</name>
    <name type="ordered locus">NATL1_18521</name>
</gene>
<accession>A2C4J8</accession>
<proteinExistence type="inferred from homology"/>